<comment type="function">
    <text evidence="1">Catalyzes the attachment of threonine to tRNA(Thr) in a two-step reaction: L-threonine is first activated by ATP to form Thr-AMP and then transferred to the acceptor end of tRNA(Thr). Also edits incorrectly charged L-seryl-tRNA(Thr).</text>
</comment>
<comment type="catalytic activity">
    <reaction evidence="1">
        <text>tRNA(Thr) + L-threonine + ATP = L-threonyl-tRNA(Thr) + AMP + diphosphate + H(+)</text>
        <dbReference type="Rhea" id="RHEA:24624"/>
        <dbReference type="Rhea" id="RHEA-COMP:9670"/>
        <dbReference type="Rhea" id="RHEA-COMP:9704"/>
        <dbReference type="ChEBI" id="CHEBI:15378"/>
        <dbReference type="ChEBI" id="CHEBI:30616"/>
        <dbReference type="ChEBI" id="CHEBI:33019"/>
        <dbReference type="ChEBI" id="CHEBI:57926"/>
        <dbReference type="ChEBI" id="CHEBI:78442"/>
        <dbReference type="ChEBI" id="CHEBI:78534"/>
        <dbReference type="ChEBI" id="CHEBI:456215"/>
        <dbReference type="EC" id="6.1.1.3"/>
    </reaction>
</comment>
<comment type="cofactor">
    <cofactor evidence="1">
        <name>Zn(2+)</name>
        <dbReference type="ChEBI" id="CHEBI:29105"/>
    </cofactor>
    <text evidence="1">Binds 1 zinc ion per subunit.</text>
</comment>
<comment type="subunit">
    <text evidence="1">Homodimer.</text>
</comment>
<comment type="subcellular location">
    <subcellularLocation>
        <location evidence="1">Cytoplasm</location>
    </subcellularLocation>
</comment>
<comment type="similarity">
    <text evidence="1">Belongs to the class-II aminoacyl-tRNA synthetase family.</text>
</comment>
<name>SYT_SHEAM</name>
<feature type="chain" id="PRO_1000020500" description="Threonine--tRNA ligase">
    <location>
        <begin position="1"/>
        <end position="642"/>
    </location>
</feature>
<feature type="domain" description="TGS" evidence="2">
    <location>
        <begin position="1"/>
        <end position="61"/>
    </location>
</feature>
<feature type="region of interest" description="Catalytic" evidence="1">
    <location>
        <begin position="243"/>
        <end position="534"/>
    </location>
</feature>
<feature type="binding site" evidence="1">
    <location>
        <position position="334"/>
    </location>
    <ligand>
        <name>Zn(2+)</name>
        <dbReference type="ChEBI" id="CHEBI:29105"/>
    </ligand>
</feature>
<feature type="binding site" evidence="1">
    <location>
        <position position="385"/>
    </location>
    <ligand>
        <name>Zn(2+)</name>
        <dbReference type="ChEBI" id="CHEBI:29105"/>
    </ligand>
</feature>
<feature type="binding site" evidence="1">
    <location>
        <position position="511"/>
    </location>
    <ligand>
        <name>Zn(2+)</name>
        <dbReference type="ChEBI" id="CHEBI:29105"/>
    </ligand>
</feature>
<sequence length="642" mass="73230">MPVITLPDGSQRVFANPVSTMDVAADIGPGLAKACIAGRVNGELKDACDLIHEDASLSIITARDEEGLEILRHSCAHLLGHAIKQLWPQTKMAIGPVIDNGFYYDVDLEHKLTADDIAALEKRMLELAKTDYDVVKRVVSWQEARDTFEGRGESYKMAILDENIAKDATPALYHHEEYTDMCRGPHVPNMRFCHHFKLMSVAGAYWRGDSNNKMLQRIYGTAWGDKKALNTHLARLEEAAKRDHRKIGKQLDLYHMQEEAPGMVFWHNDGWSIFRELETFIRHKLSEYDYQEVKGPFMMDRVLWERSGHWDKYADAMFTTASENREYAIKPMNCPGHVQIFNQGLKSYRDLPLRMAEFGCCHRNEPSGSLHGLMRVRGFTQDDAHIFCTEEQVQEEVSACIRMVYDTYSTFGFENIVVKLSTRPEKRIGDDDMWDRAESALIEALNANGIAFEILPGEGAFYGPKIEFTLHDCLDRAWQCGTVQLDYALPGRLGATYVAEDNARQTPVMIHRAILGSLERFIGILIEEYAGRFPAWLAPVQAVVMNITDKQADYVEELVKFFKEQGIRASQDLRNEKIGFKIREHTLRRVPYLLVVGDQEMENREIAVRTRDGKDLGKMSIDAFVASVKEQISHRSLKLLEE</sequence>
<accession>A1S6G4</accession>
<keyword id="KW-0030">Aminoacyl-tRNA synthetase</keyword>
<keyword id="KW-0067">ATP-binding</keyword>
<keyword id="KW-0963">Cytoplasm</keyword>
<keyword id="KW-0436">Ligase</keyword>
<keyword id="KW-0479">Metal-binding</keyword>
<keyword id="KW-0547">Nucleotide-binding</keyword>
<keyword id="KW-0648">Protein biosynthesis</keyword>
<keyword id="KW-1185">Reference proteome</keyword>
<keyword id="KW-0694">RNA-binding</keyword>
<keyword id="KW-0820">tRNA-binding</keyword>
<keyword id="KW-0862">Zinc</keyword>
<gene>
    <name evidence="1" type="primary">thrS</name>
    <name type="ordered locus">Sama_1765</name>
</gene>
<protein>
    <recommendedName>
        <fullName evidence="1">Threonine--tRNA ligase</fullName>
        <ecNumber evidence="1">6.1.1.3</ecNumber>
    </recommendedName>
    <alternativeName>
        <fullName evidence="1">Threonyl-tRNA synthetase</fullName>
        <shortName evidence="1">ThrRS</shortName>
    </alternativeName>
</protein>
<reference key="1">
    <citation type="submission" date="2006-12" db="EMBL/GenBank/DDBJ databases">
        <title>Complete sequence of Shewanella amazonensis SB2B.</title>
        <authorList>
            <consortium name="US DOE Joint Genome Institute"/>
            <person name="Copeland A."/>
            <person name="Lucas S."/>
            <person name="Lapidus A."/>
            <person name="Barry K."/>
            <person name="Detter J.C."/>
            <person name="Glavina del Rio T."/>
            <person name="Hammon N."/>
            <person name="Israni S."/>
            <person name="Dalin E."/>
            <person name="Tice H."/>
            <person name="Pitluck S."/>
            <person name="Munk A.C."/>
            <person name="Brettin T."/>
            <person name="Bruce D."/>
            <person name="Han C."/>
            <person name="Tapia R."/>
            <person name="Gilna P."/>
            <person name="Schmutz J."/>
            <person name="Larimer F."/>
            <person name="Land M."/>
            <person name="Hauser L."/>
            <person name="Kyrpides N."/>
            <person name="Mikhailova N."/>
            <person name="Fredrickson J."/>
            <person name="Richardson P."/>
        </authorList>
    </citation>
    <scope>NUCLEOTIDE SEQUENCE [LARGE SCALE GENOMIC DNA]</scope>
    <source>
        <strain>ATCC BAA-1098 / SB2B</strain>
    </source>
</reference>
<evidence type="ECO:0000255" key="1">
    <source>
        <dbReference type="HAMAP-Rule" id="MF_00184"/>
    </source>
</evidence>
<evidence type="ECO:0000255" key="2">
    <source>
        <dbReference type="PROSITE-ProRule" id="PRU01228"/>
    </source>
</evidence>
<dbReference type="EC" id="6.1.1.3" evidence="1"/>
<dbReference type="EMBL" id="CP000507">
    <property type="protein sequence ID" value="ABL99970.1"/>
    <property type="molecule type" value="Genomic_DNA"/>
</dbReference>
<dbReference type="RefSeq" id="WP_011759878.1">
    <property type="nucleotide sequence ID" value="NC_008700.1"/>
</dbReference>
<dbReference type="SMR" id="A1S6G4"/>
<dbReference type="STRING" id="326297.Sama_1765"/>
<dbReference type="KEGG" id="saz:Sama_1765"/>
<dbReference type="eggNOG" id="COG0441">
    <property type="taxonomic scope" value="Bacteria"/>
</dbReference>
<dbReference type="HOGENOM" id="CLU_008554_0_1_6"/>
<dbReference type="OrthoDB" id="9802304at2"/>
<dbReference type="Proteomes" id="UP000009175">
    <property type="component" value="Chromosome"/>
</dbReference>
<dbReference type="GO" id="GO:0005829">
    <property type="term" value="C:cytosol"/>
    <property type="evidence" value="ECO:0007669"/>
    <property type="project" value="TreeGrafter"/>
</dbReference>
<dbReference type="GO" id="GO:0005524">
    <property type="term" value="F:ATP binding"/>
    <property type="evidence" value="ECO:0007669"/>
    <property type="project" value="UniProtKB-UniRule"/>
</dbReference>
<dbReference type="GO" id="GO:0046872">
    <property type="term" value="F:metal ion binding"/>
    <property type="evidence" value="ECO:0007669"/>
    <property type="project" value="UniProtKB-KW"/>
</dbReference>
<dbReference type="GO" id="GO:0004829">
    <property type="term" value="F:threonine-tRNA ligase activity"/>
    <property type="evidence" value="ECO:0007669"/>
    <property type="project" value="UniProtKB-UniRule"/>
</dbReference>
<dbReference type="GO" id="GO:0000049">
    <property type="term" value="F:tRNA binding"/>
    <property type="evidence" value="ECO:0007669"/>
    <property type="project" value="UniProtKB-KW"/>
</dbReference>
<dbReference type="GO" id="GO:0006435">
    <property type="term" value="P:threonyl-tRNA aminoacylation"/>
    <property type="evidence" value="ECO:0007669"/>
    <property type="project" value="UniProtKB-UniRule"/>
</dbReference>
<dbReference type="CDD" id="cd01667">
    <property type="entry name" value="TGS_ThrRS"/>
    <property type="match status" value="1"/>
</dbReference>
<dbReference type="CDD" id="cd00860">
    <property type="entry name" value="ThrRS_anticodon"/>
    <property type="match status" value="1"/>
</dbReference>
<dbReference type="CDD" id="cd00771">
    <property type="entry name" value="ThrRS_core"/>
    <property type="match status" value="1"/>
</dbReference>
<dbReference type="FunFam" id="3.10.20.30:FF:000005">
    <property type="entry name" value="Threonine--tRNA ligase"/>
    <property type="match status" value="1"/>
</dbReference>
<dbReference type="FunFam" id="3.30.54.20:FF:000002">
    <property type="entry name" value="Threonine--tRNA ligase"/>
    <property type="match status" value="1"/>
</dbReference>
<dbReference type="FunFam" id="3.30.930.10:FF:000002">
    <property type="entry name" value="Threonine--tRNA ligase"/>
    <property type="match status" value="1"/>
</dbReference>
<dbReference type="FunFam" id="3.40.50.800:FF:000001">
    <property type="entry name" value="Threonine--tRNA ligase"/>
    <property type="match status" value="1"/>
</dbReference>
<dbReference type="FunFam" id="3.30.980.10:FF:000005">
    <property type="entry name" value="Threonyl-tRNA synthetase, mitochondrial"/>
    <property type="match status" value="1"/>
</dbReference>
<dbReference type="Gene3D" id="3.10.20.30">
    <property type="match status" value="1"/>
</dbReference>
<dbReference type="Gene3D" id="3.30.54.20">
    <property type="match status" value="1"/>
</dbReference>
<dbReference type="Gene3D" id="3.40.50.800">
    <property type="entry name" value="Anticodon-binding domain"/>
    <property type="match status" value="1"/>
</dbReference>
<dbReference type="Gene3D" id="3.30.930.10">
    <property type="entry name" value="Bira Bifunctional Protein, Domain 2"/>
    <property type="match status" value="1"/>
</dbReference>
<dbReference type="Gene3D" id="3.30.980.10">
    <property type="entry name" value="Threonyl-trna Synthetase, Chain A, domain 2"/>
    <property type="match status" value="1"/>
</dbReference>
<dbReference type="HAMAP" id="MF_00184">
    <property type="entry name" value="Thr_tRNA_synth"/>
    <property type="match status" value="1"/>
</dbReference>
<dbReference type="InterPro" id="IPR002314">
    <property type="entry name" value="aa-tRNA-synt_IIb"/>
</dbReference>
<dbReference type="InterPro" id="IPR006195">
    <property type="entry name" value="aa-tRNA-synth_II"/>
</dbReference>
<dbReference type="InterPro" id="IPR045864">
    <property type="entry name" value="aa-tRNA-synth_II/BPL/LPL"/>
</dbReference>
<dbReference type="InterPro" id="IPR004154">
    <property type="entry name" value="Anticodon-bd"/>
</dbReference>
<dbReference type="InterPro" id="IPR036621">
    <property type="entry name" value="Anticodon-bd_dom_sf"/>
</dbReference>
<dbReference type="InterPro" id="IPR012675">
    <property type="entry name" value="Beta-grasp_dom_sf"/>
</dbReference>
<dbReference type="InterPro" id="IPR004095">
    <property type="entry name" value="TGS"/>
</dbReference>
<dbReference type="InterPro" id="IPR012676">
    <property type="entry name" value="TGS-like"/>
</dbReference>
<dbReference type="InterPro" id="IPR002320">
    <property type="entry name" value="Thr-tRNA-ligase_IIa"/>
</dbReference>
<dbReference type="InterPro" id="IPR018163">
    <property type="entry name" value="Thr/Ala-tRNA-synth_IIc_edit"/>
</dbReference>
<dbReference type="InterPro" id="IPR047246">
    <property type="entry name" value="ThrRS_anticodon"/>
</dbReference>
<dbReference type="InterPro" id="IPR033728">
    <property type="entry name" value="ThrRS_core"/>
</dbReference>
<dbReference type="InterPro" id="IPR012947">
    <property type="entry name" value="tRNA_SAD"/>
</dbReference>
<dbReference type="NCBIfam" id="TIGR00418">
    <property type="entry name" value="thrS"/>
    <property type="match status" value="1"/>
</dbReference>
<dbReference type="PANTHER" id="PTHR11451:SF44">
    <property type="entry name" value="THREONINE--TRNA LIGASE, CHLOROPLASTIC_MITOCHONDRIAL 2"/>
    <property type="match status" value="1"/>
</dbReference>
<dbReference type="PANTHER" id="PTHR11451">
    <property type="entry name" value="THREONINE-TRNA LIGASE"/>
    <property type="match status" value="1"/>
</dbReference>
<dbReference type="Pfam" id="PF03129">
    <property type="entry name" value="HGTP_anticodon"/>
    <property type="match status" value="1"/>
</dbReference>
<dbReference type="Pfam" id="PF02824">
    <property type="entry name" value="TGS"/>
    <property type="match status" value="1"/>
</dbReference>
<dbReference type="Pfam" id="PF00587">
    <property type="entry name" value="tRNA-synt_2b"/>
    <property type="match status" value="1"/>
</dbReference>
<dbReference type="Pfam" id="PF07973">
    <property type="entry name" value="tRNA_SAD"/>
    <property type="match status" value="1"/>
</dbReference>
<dbReference type="PRINTS" id="PR01047">
    <property type="entry name" value="TRNASYNTHTHR"/>
</dbReference>
<dbReference type="SMART" id="SM00863">
    <property type="entry name" value="tRNA_SAD"/>
    <property type="match status" value="1"/>
</dbReference>
<dbReference type="SUPFAM" id="SSF52954">
    <property type="entry name" value="Class II aaRS ABD-related"/>
    <property type="match status" value="1"/>
</dbReference>
<dbReference type="SUPFAM" id="SSF55681">
    <property type="entry name" value="Class II aaRS and biotin synthetases"/>
    <property type="match status" value="1"/>
</dbReference>
<dbReference type="SUPFAM" id="SSF81271">
    <property type="entry name" value="TGS-like"/>
    <property type="match status" value="1"/>
</dbReference>
<dbReference type="SUPFAM" id="SSF55186">
    <property type="entry name" value="ThrRS/AlaRS common domain"/>
    <property type="match status" value="1"/>
</dbReference>
<dbReference type="PROSITE" id="PS50862">
    <property type="entry name" value="AA_TRNA_LIGASE_II"/>
    <property type="match status" value="1"/>
</dbReference>
<dbReference type="PROSITE" id="PS51880">
    <property type="entry name" value="TGS"/>
    <property type="match status" value="1"/>
</dbReference>
<organism>
    <name type="scientific">Shewanella amazonensis (strain ATCC BAA-1098 / SB2B)</name>
    <dbReference type="NCBI Taxonomy" id="326297"/>
    <lineage>
        <taxon>Bacteria</taxon>
        <taxon>Pseudomonadati</taxon>
        <taxon>Pseudomonadota</taxon>
        <taxon>Gammaproteobacteria</taxon>
        <taxon>Alteromonadales</taxon>
        <taxon>Shewanellaceae</taxon>
        <taxon>Shewanella</taxon>
    </lineage>
</organism>
<proteinExistence type="inferred from homology"/>